<name>FOLD_PELPB</name>
<accession>B4SGR4</accession>
<dbReference type="EC" id="1.5.1.5" evidence="1"/>
<dbReference type="EC" id="3.5.4.9" evidence="1"/>
<dbReference type="EMBL" id="CP001110">
    <property type="protein sequence ID" value="ACF43477.1"/>
    <property type="molecule type" value="Genomic_DNA"/>
</dbReference>
<dbReference type="RefSeq" id="WP_012507969.1">
    <property type="nucleotide sequence ID" value="NC_011060.1"/>
</dbReference>
<dbReference type="SMR" id="B4SGR4"/>
<dbReference type="STRING" id="324925.Ppha_1205"/>
<dbReference type="KEGG" id="pph:Ppha_1205"/>
<dbReference type="eggNOG" id="COG0190">
    <property type="taxonomic scope" value="Bacteria"/>
</dbReference>
<dbReference type="HOGENOM" id="CLU_034045_2_1_10"/>
<dbReference type="OrthoDB" id="9803580at2"/>
<dbReference type="UniPathway" id="UPA00193"/>
<dbReference type="Proteomes" id="UP000002724">
    <property type="component" value="Chromosome"/>
</dbReference>
<dbReference type="GO" id="GO:0005829">
    <property type="term" value="C:cytosol"/>
    <property type="evidence" value="ECO:0007669"/>
    <property type="project" value="TreeGrafter"/>
</dbReference>
<dbReference type="GO" id="GO:0004477">
    <property type="term" value="F:methenyltetrahydrofolate cyclohydrolase activity"/>
    <property type="evidence" value="ECO:0007669"/>
    <property type="project" value="UniProtKB-UniRule"/>
</dbReference>
<dbReference type="GO" id="GO:0004488">
    <property type="term" value="F:methylenetetrahydrofolate dehydrogenase (NADP+) activity"/>
    <property type="evidence" value="ECO:0007669"/>
    <property type="project" value="UniProtKB-UniRule"/>
</dbReference>
<dbReference type="GO" id="GO:0000105">
    <property type="term" value="P:L-histidine biosynthetic process"/>
    <property type="evidence" value="ECO:0007669"/>
    <property type="project" value="UniProtKB-KW"/>
</dbReference>
<dbReference type="GO" id="GO:0009086">
    <property type="term" value="P:methionine biosynthetic process"/>
    <property type="evidence" value="ECO:0007669"/>
    <property type="project" value="UniProtKB-KW"/>
</dbReference>
<dbReference type="GO" id="GO:0006164">
    <property type="term" value="P:purine nucleotide biosynthetic process"/>
    <property type="evidence" value="ECO:0007669"/>
    <property type="project" value="UniProtKB-KW"/>
</dbReference>
<dbReference type="GO" id="GO:0035999">
    <property type="term" value="P:tetrahydrofolate interconversion"/>
    <property type="evidence" value="ECO:0007669"/>
    <property type="project" value="UniProtKB-UniRule"/>
</dbReference>
<dbReference type="CDD" id="cd01080">
    <property type="entry name" value="NAD_bind_m-THF_DH_Cyclohyd"/>
    <property type="match status" value="1"/>
</dbReference>
<dbReference type="FunFam" id="3.40.50.720:FF:000189">
    <property type="entry name" value="Bifunctional protein FolD"/>
    <property type="match status" value="1"/>
</dbReference>
<dbReference type="FunFam" id="3.40.50.10860:FF:000005">
    <property type="entry name" value="C-1-tetrahydrofolate synthase, cytoplasmic, putative"/>
    <property type="match status" value="1"/>
</dbReference>
<dbReference type="Gene3D" id="3.40.50.10860">
    <property type="entry name" value="Leucine Dehydrogenase, chain A, domain 1"/>
    <property type="match status" value="1"/>
</dbReference>
<dbReference type="Gene3D" id="3.40.50.720">
    <property type="entry name" value="NAD(P)-binding Rossmann-like Domain"/>
    <property type="match status" value="1"/>
</dbReference>
<dbReference type="HAMAP" id="MF_01576">
    <property type="entry name" value="THF_DHG_CYH"/>
    <property type="match status" value="1"/>
</dbReference>
<dbReference type="InterPro" id="IPR046346">
    <property type="entry name" value="Aminoacid_DH-like_N_sf"/>
</dbReference>
<dbReference type="InterPro" id="IPR036291">
    <property type="entry name" value="NAD(P)-bd_dom_sf"/>
</dbReference>
<dbReference type="InterPro" id="IPR000672">
    <property type="entry name" value="THF_DH/CycHdrlase"/>
</dbReference>
<dbReference type="InterPro" id="IPR020630">
    <property type="entry name" value="THF_DH/CycHdrlase_cat_dom"/>
</dbReference>
<dbReference type="InterPro" id="IPR020867">
    <property type="entry name" value="THF_DH/CycHdrlase_CS"/>
</dbReference>
<dbReference type="InterPro" id="IPR020631">
    <property type="entry name" value="THF_DH/CycHdrlase_NAD-bd_dom"/>
</dbReference>
<dbReference type="NCBIfam" id="NF010771">
    <property type="entry name" value="PRK14174.1"/>
    <property type="match status" value="1"/>
</dbReference>
<dbReference type="NCBIfam" id="NF010783">
    <property type="entry name" value="PRK14186.1"/>
    <property type="match status" value="1"/>
</dbReference>
<dbReference type="PANTHER" id="PTHR48099:SF5">
    <property type="entry name" value="C-1-TETRAHYDROFOLATE SYNTHASE, CYTOPLASMIC"/>
    <property type="match status" value="1"/>
</dbReference>
<dbReference type="PANTHER" id="PTHR48099">
    <property type="entry name" value="C-1-TETRAHYDROFOLATE SYNTHASE, CYTOPLASMIC-RELATED"/>
    <property type="match status" value="1"/>
</dbReference>
<dbReference type="Pfam" id="PF00763">
    <property type="entry name" value="THF_DHG_CYH"/>
    <property type="match status" value="1"/>
</dbReference>
<dbReference type="Pfam" id="PF02882">
    <property type="entry name" value="THF_DHG_CYH_C"/>
    <property type="match status" value="1"/>
</dbReference>
<dbReference type="PRINTS" id="PR00085">
    <property type="entry name" value="THFDHDRGNASE"/>
</dbReference>
<dbReference type="SUPFAM" id="SSF53223">
    <property type="entry name" value="Aminoacid dehydrogenase-like, N-terminal domain"/>
    <property type="match status" value="1"/>
</dbReference>
<dbReference type="SUPFAM" id="SSF51735">
    <property type="entry name" value="NAD(P)-binding Rossmann-fold domains"/>
    <property type="match status" value="1"/>
</dbReference>
<dbReference type="PROSITE" id="PS00767">
    <property type="entry name" value="THF_DHG_CYH_2"/>
    <property type="match status" value="1"/>
</dbReference>
<feature type="chain" id="PRO_1000147505" description="Bifunctional protein FolD">
    <location>
        <begin position="1"/>
        <end position="295"/>
    </location>
</feature>
<feature type="binding site" evidence="1">
    <location>
        <begin position="166"/>
        <end position="168"/>
    </location>
    <ligand>
        <name>NADP(+)</name>
        <dbReference type="ChEBI" id="CHEBI:58349"/>
    </ligand>
</feature>
<feature type="binding site" evidence="1">
    <location>
        <position position="195"/>
    </location>
    <ligand>
        <name>NADP(+)</name>
        <dbReference type="ChEBI" id="CHEBI:58349"/>
    </ligand>
</feature>
<feature type="binding site" evidence="1">
    <location>
        <position position="236"/>
    </location>
    <ligand>
        <name>NADP(+)</name>
        <dbReference type="ChEBI" id="CHEBI:58349"/>
    </ligand>
</feature>
<organism>
    <name type="scientific">Pelodictyon phaeoclathratiforme (strain DSM 5477 / BU-1)</name>
    <dbReference type="NCBI Taxonomy" id="324925"/>
    <lineage>
        <taxon>Bacteria</taxon>
        <taxon>Pseudomonadati</taxon>
        <taxon>Chlorobiota</taxon>
        <taxon>Chlorobiia</taxon>
        <taxon>Chlorobiales</taxon>
        <taxon>Chlorobiaceae</taxon>
        <taxon>Chlorobium/Pelodictyon group</taxon>
        <taxon>Pelodictyon</taxon>
    </lineage>
</organism>
<reference key="1">
    <citation type="submission" date="2008-06" db="EMBL/GenBank/DDBJ databases">
        <title>Complete sequence of Pelodictyon phaeoclathratiforme BU-1.</title>
        <authorList>
            <consortium name="US DOE Joint Genome Institute"/>
            <person name="Lucas S."/>
            <person name="Copeland A."/>
            <person name="Lapidus A."/>
            <person name="Glavina del Rio T."/>
            <person name="Dalin E."/>
            <person name="Tice H."/>
            <person name="Bruce D."/>
            <person name="Goodwin L."/>
            <person name="Pitluck S."/>
            <person name="Schmutz J."/>
            <person name="Larimer F."/>
            <person name="Land M."/>
            <person name="Hauser L."/>
            <person name="Kyrpides N."/>
            <person name="Mikhailova N."/>
            <person name="Liu Z."/>
            <person name="Li T."/>
            <person name="Zhao F."/>
            <person name="Overmann J."/>
            <person name="Bryant D.A."/>
            <person name="Richardson P."/>
        </authorList>
    </citation>
    <scope>NUCLEOTIDE SEQUENCE [LARGE SCALE GENOMIC DNA]</scope>
    <source>
        <strain>DSM 5477 / BU-1</strain>
    </source>
</reference>
<protein>
    <recommendedName>
        <fullName evidence="1">Bifunctional protein FolD</fullName>
    </recommendedName>
    <domain>
        <recommendedName>
            <fullName evidence="1">Methylenetetrahydrofolate dehydrogenase</fullName>
            <ecNumber evidence="1">1.5.1.5</ecNumber>
        </recommendedName>
    </domain>
    <domain>
        <recommendedName>
            <fullName evidence="1">Methenyltetrahydrofolate cyclohydrolase</fullName>
            <ecNumber evidence="1">3.5.4.9</ecNumber>
        </recommendedName>
    </domain>
</protein>
<gene>
    <name evidence="1" type="primary">folD</name>
    <name type="ordered locus">Ppha_1205</name>
</gene>
<proteinExistence type="inferred from homology"/>
<comment type="function">
    <text evidence="1">Catalyzes the oxidation of 5,10-methylenetetrahydrofolate to 5,10-methenyltetrahydrofolate and then the hydrolysis of 5,10-methenyltetrahydrofolate to 10-formyltetrahydrofolate.</text>
</comment>
<comment type="catalytic activity">
    <reaction evidence="1">
        <text>(6R)-5,10-methylene-5,6,7,8-tetrahydrofolate + NADP(+) = (6R)-5,10-methenyltetrahydrofolate + NADPH</text>
        <dbReference type="Rhea" id="RHEA:22812"/>
        <dbReference type="ChEBI" id="CHEBI:15636"/>
        <dbReference type="ChEBI" id="CHEBI:57455"/>
        <dbReference type="ChEBI" id="CHEBI:57783"/>
        <dbReference type="ChEBI" id="CHEBI:58349"/>
        <dbReference type="EC" id="1.5.1.5"/>
    </reaction>
</comment>
<comment type="catalytic activity">
    <reaction evidence="1">
        <text>(6R)-5,10-methenyltetrahydrofolate + H2O = (6R)-10-formyltetrahydrofolate + H(+)</text>
        <dbReference type="Rhea" id="RHEA:23700"/>
        <dbReference type="ChEBI" id="CHEBI:15377"/>
        <dbReference type="ChEBI" id="CHEBI:15378"/>
        <dbReference type="ChEBI" id="CHEBI:57455"/>
        <dbReference type="ChEBI" id="CHEBI:195366"/>
        <dbReference type="EC" id="3.5.4.9"/>
    </reaction>
</comment>
<comment type="pathway">
    <text evidence="1">One-carbon metabolism; tetrahydrofolate interconversion.</text>
</comment>
<comment type="subunit">
    <text evidence="1">Homodimer.</text>
</comment>
<comment type="similarity">
    <text evidence="1">Belongs to the tetrahydrofolate dehydrogenase/cyclohydrolase family.</text>
</comment>
<evidence type="ECO:0000255" key="1">
    <source>
        <dbReference type="HAMAP-Rule" id="MF_01576"/>
    </source>
</evidence>
<sequence>MLIIDGKKVSLDLKNELKASVDNFRSITGKVPGLTVIIVGQDPASQVYVRNKAKTCKEIGMISTVIEMADDTTEKHLIETIHKLNNDPTVHGILVQQPLPKQIDEFAVTLAIDPSKDVDGFHPENLGRLVMGHLDKCFVSCTPYGILELLGRYNIETRGKHCVVVGRSNIVGKPMANLMLQKLDATNCTVTICHSATKNIPFYTLQADILIAAIGKAGFITADMVKPGAVVIDVGINRIEDPSTKSGYRLVGDVDFEAVSTVASAMTPVPGGVGPMTIAMLLKNTLQSFQRINNL</sequence>
<keyword id="KW-0028">Amino-acid biosynthesis</keyword>
<keyword id="KW-0368">Histidine biosynthesis</keyword>
<keyword id="KW-0378">Hydrolase</keyword>
<keyword id="KW-0486">Methionine biosynthesis</keyword>
<keyword id="KW-0511">Multifunctional enzyme</keyword>
<keyword id="KW-0521">NADP</keyword>
<keyword id="KW-0554">One-carbon metabolism</keyword>
<keyword id="KW-0560">Oxidoreductase</keyword>
<keyword id="KW-0658">Purine biosynthesis</keyword>
<keyword id="KW-1185">Reference proteome</keyword>